<name>ISPE_CLOTE</name>
<accession>Q899A2</accession>
<evidence type="ECO:0000255" key="1">
    <source>
        <dbReference type="HAMAP-Rule" id="MF_00061"/>
    </source>
</evidence>
<feature type="chain" id="PRO_0000189209" description="4-diphosphocytidyl-2-C-methyl-D-erythritol kinase">
    <location>
        <begin position="1"/>
        <end position="280"/>
    </location>
</feature>
<feature type="active site" evidence="1">
    <location>
        <position position="8"/>
    </location>
</feature>
<feature type="active site" evidence="1">
    <location>
        <position position="133"/>
    </location>
</feature>
<feature type="binding site" evidence="1">
    <location>
        <begin position="91"/>
        <end position="101"/>
    </location>
    <ligand>
        <name>ATP</name>
        <dbReference type="ChEBI" id="CHEBI:30616"/>
    </ligand>
</feature>
<dbReference type="EC" id="2.7.1.148" evidence="1"/>
<dbReference type="EMBL" id="AE015927">
    <property type="protein sequence ID" value="AAO34927.1"/>
    <property type="molecule type" value="Genomic_DNA"/>
</dbReference>
<dbReference type="RefSeq" id="WP_011098594.1">
    <property type="nucleotide sequence ID" value="NC_004557.1"/>
</dbReference>
<dbReference type="SMR" id="Q899A2"/>
<dbReference type="STRING" id="212717.CTC_00283"/>
<dbReference type="GeneID" id="24253819"/>
<dbReference type="KEGG" id="ctc:CTC_00283"/>
<dbReference type="HOGENOM" id="CLU_053057_1_1_9"/>
<dbReference type="OrthoDB" id="9809438at2"/>
<dbReference type="UniPathway" id="UPA00056">
    <property type="reaction ID" value="UER00094"/>
</dbReference>
<dbReference type="Proteomes" id="UP000001412">
    <property type="component" value="Chromosome"/>
</dbReference>
<dbReference type="GO" id="GO:0050515">
    <property type="term" value="F:4-(cytidine 5'-diphospho)-2-C-methyl-D-erythritol kinase activity"/>
    <property type="evidence" value="ECO:0007669"/>
    <property type="project" value="UniProtKB-UniRule"/>
</dbReference>
<dbReference type="GO" id="GO:0005524">
    <property type="term" value="F:ATP binding"/>
    <property type="evidence" value="ECO:0007669"/>
    <property type="project" value="UniProtKB-UniRule"/>
</dbReference>
<dbReference type="GO" id="GO:0019288">
    <property type="term" value="P:isopentenyl diphosphate biosynthetic process, methylerythritol 4-phosphate pathway"/>
    <property type="evidence" value="ECO:0007669"/>
    <property type="project" value="UniProtKB-UniRule"/>
</dbReference>
<dbReference type="GO" id="GO:0016114">
    <property type="term" value="P:terpenoid biosynthetic process"/>
    <property type="evidence" value="ECO:0007669"/>
    <property type="project" value="InterPro"/>
</dbReference>
<dbReference type="FunFam" id="3.30.230.10:FF:000029">
    <property type="entry name" value="4-diphosphocytidyl-2-C-methyl-D-erythritol kinase"/>
    <property type="match status" value="1"/>
</dbReference>
<dbReference type="Gene3D" id="3.30.230.10">
    <property type="match status" value="1"/>
</dbReference>
<dbReference type="Gene3D" id="3.30.70.890">
    <property type="entry name" value="GHMP kinase, C-terminal domain"/>
    <property type="match status" value="1"/>
</dbReference>
<dbReference type="HAMAP" id="MF_00061">
    <property type="entry name" value="IspE"/>
    <property type="match status" value="1"/>
</dbReference>
<dbReference type="InterPro" id="IPR013750">
    <property type="entry name" value="GHMP_kinase_C_dom"/>
</dbReference>
<dbReference type="InterPro" id="IPR036554">
    <property type="entry name" value="GHMP_kinase_C_sf"/>
</dbReference>
<dbReference type="InterPro" id="IPR006204">
    <property type="entry name" value="GHMP_kinase_N_dom"/>
</dbReference>
<dbReference type="InterPro" id="IPR004424">
    <property type="entry name" value="IspE"/>
</dbReference>
<dbReference type="InterPro" id="IPR020568">
    <property type="entry name" value="Ribosomal_Su5_D2-typ_SF"/>
</dbReference>
<dbReference type="InterPro" id="IPR014721">
    <property type="entry name" value="Ribsml_uS5_D2-typ_fold_subgr"/>
</dbReference>
<dbReference type="NCBIfam" id="TIGR00154">
    <property type="entry name" value="ispE"/>
    <property type="match status" value="1"/>
</dbReference>
<dbReference type="PANTHER" id="PTHR43527">
    <property type="entry name" value="4-DIPHOSPHOCYTIDYL-2-C-METHYL-D-ERYTHRITOL KINASE, CHLOROPLASTIC"/>
    <property type="match status" value="1"/>
</dbReference>
<dbReference type="PANTHER" id="PTHR43527:SF2">
    <property type="entry name" value="4-DIPHOSPHOCYTIDYL-2-C-METHYL-D-ERYTHRITOL KINASE, CHLOROPLASTIC"/>
    <property type="match status" value="1"/>
</dbReference>
<dbReference type="Pfam" id="PF08544">
    <property type="entry name" value="GHMP_kinases_C"/>
    <property type="match status" value="1"/>
</dbReference>
<dbReference type="Pfam" id="PF00288">
    <property type="entry name" value="GHMP_kinases_N"/>
    <property type="match status" value="1"/>
</dbReference>
<dbReference type="PIRSF" id="PIRSF010376">
    <property type="entry name" value="IspE"/>
    <property type="match status" value="1"/>
</dbReference>
<dbReference type="PRINTS" id="PR00958">
    <property type="entry name" value="HOMSERKINASE"/>
</dbReference>
<dbReference type="SUPFAM" id="SSF55060">
    <property type="entry name" value="GHMP Kinase, C-terminal domain"/>
    <property type="match status" value="1"/>
</dbReference>
<dbReference type="SUPFAM" id="SSF54211">
    <property type="entry name" value="Ribosomal protein S5 domain 2-like"/>
    <property type="match status" value="1"/>
</dbReference>
<reference key="1">
    <citation type="journal article" date="2003" name="Proc. Natl. Acad. Sci. U.S.A.">
        <title>The genome sequence of Clostridium tetani, the causative agent of tetanus disease.</title>
        <authorList>
            <person name="Brueggemann H."/>
            <person name="Baeumer S."/>
            <person name="Fricke W.F."/>
            <person name="Wiezer A."/>
            <person name="Liesegang H."/>
            <person name="Decker I."/>
            <person name="Herzberg C."/>
            <person name="Martinez-Arias R."/>
            <person name="Merkl R."/>
            <person name="Henne A."/>
            <person name="Gottschalk G."/>
        </authorList>
    </citation>
    <scope>NUCLEOTIDE SEQUENCE [LARGE SCALE GENOMIC DNA]</scope>
    <source>
        <strain>Massachusetts / E88</strain>
    </source>
</reference>
<sequence length="280" mass="31617">MKIKAYAKINLSLDIVGVREDGYHLLEMVMQTIDLYDVVHLNIKDKDIEINSNNCNIPLDNRNLAYKAAKLFKETFNIKEGVEIYIEKNIPIEAGLAGGSSDAAAVLRGLRDIFMPNLNNKELAKIGVRIGADVPYCIYGGTAFCEGIGEKITKLNPFKDHYLVLVKPDFGICTKETYSKIDKKEIIKHPDTKEIIKSIGENNLKLLCKNMENILEIVTLEERSNLKDIKKELLQYGSLGAQMTGSGPTIFGFFPYRDSAENCYRKMKSKYNEVYISKTI</sequence>
<protein>
    <recommendedName>
        <fullName evidence="1">4-diphosphocytidyl-2-C-methyl-D-erythritol kinase</fullName>
        <shortName evidence="1">CMK</shortName>
        <ecNumber evidence="1">2.7.1.148</ecNumber>
    </recommendedName>
    <alternativeName>
        <fullName evidence="1">4-(cytidine-5'-diphospho)-2-C-methyl-D-erythritol kinase</fullName>
    </alternativeName>
</protein>
<proteinExistence type="inferred from homology"/>
<gene>
    <name evidence="1" type="primary">ispE</name>
    <name type="ordered locus">CTC_00283</name>
</gene>
<keyword id="KW-0067">ATP-binding</keyword>
<keyword id="KW-0414">Isoprene biosynthesis</keyword>
<keyword id="KW-0418">Kinase</keyword>
<keyword id="KW-0547">Nucleotide-binding</keyword>
<keyword id="KW-1185">Reference proteome</keyword>
<keyword id="KW-0808">Transferase</keyword>
<comment type="function">
    <text evidence="1">Catalyzes the phosphorylation of the position 2 hydroxy group of 4-diphosphocytidyl-2C-methyl-D-erythritol.</text>
</comment>
<comment type="catalytic activity">
    <reaction evidence="1">
        <text>4-CDP-2-C-methyl-D-erythritol + ATP = 4-CDP-2-C-methyl-D-erythritol 2-phosphate + ADP + H(+)</text>
        <dbReference type="Rhea" id="RHEA:18437"/>
        <dbReference type="ChEBI" id="CHEBI:15378"/>
        <dbReference type="ChEBI" id="CHEBI:30616"/>
        <dbReference type="ChEBI" id="CHEBI:57823"/>
        <dbReference type="ChEBI" id="CHEBI:57919"/>
        <dbReference type="ChEBI" id="CHEBI:456216"/>
        <dbReference type="EC" id="2.7.1.148"/>
    </reaction>
</comment>
<comment type="pathway">
    <text evidence="1">Isoprenoid biosynthesis; isopentenyl diphosphate biosynthesis via DXP pathway; isopentenyl diphosphate from 1-deoxy-D-xylulose 5-phosphate: step 3/6.</text>
</comment>
<comment type="similarity">
    <text evidence="1">Belongs to the GHMP kinase family. IspE subfamily.</text>
</comment>
<organism>
    <name type="scientific">Clostridium tetani (strain Massachusetts / E88)</name>
    <dbReference type="NCBI Taxonomy" id="212717"/>
    <lineage>
        <taxon>Bacteria</taxon>
        <taxon>Bacillati</taxon>
        <taxon>Bacillota</taxon>
        <taxon>Clostridia</taxon>
        <taxon>Eubacteriales</taxon>
        <taxon>Clostridiaceae</taxon>
        <taxon>Clostridium</taxon>
    </lineage>
</organism>